<comment type="function">
    <text evidence="2">Synthesis and degradation of fructose 2,6-bisphosphate.</text>
</comment>
<comment type="catalytic activity">
    <reaction evidence="2">
        <text>beta-D-fructose 2,6-bisphosphate + H2O = beta-D-fructose 6-phosphate + phosphate</text>
        <dbReference type="Rhea" id="RHEA:17289"/>
        <dbReference type="ChEBI" id="CHEBI:15377"/>
        <dbReference type="ChEBI" id="CHEBI:43474"/>
        <dbReference type="ChEBI" id="CHEBI:57634"/>
        <dbReference type="ChEBI" id="CHEBI:58579"/>
        <dbReference type="EC" id="3.1.3.46"/>
    </reaction>
    <physiologicalReaction direction="left-to-right" evidence="2">
        <dbReference type="Rhea" id="RHEA:17290"/>
    </physiologicalReaction>
</comment>
<comment type="catalytic activity">
    <reaction evidence="2">
        <text>beta-D-fructose 6-phosphate + ATP = beta-D-fructose 2,6-bisphosphate + ADP + H(+)</text>
        <dbReference type="Rhea" id="RHEA:15653"/>
        <dbReference type="ChEBI" id="CHEBI:15378"/>
        <dbReference type="ChEBI" id="CHEBI:30616"/>
        <dbReference type="ChEBI" id="CHEBI:57634"/>
        <dbReference type="ChEBI" id="CHEBI:58579"/>
        <dbReference type="ChEBI" id="CHEBI:456216"/>
        <dbReference type="EC" id="2.7.1.105"/>
    </reaction>
    <physiologicalReaction direction="left-to-right" evidence="2">
        <dbReference type="Rhea" id="RHEA:15654"/>
    </physiologicalReaction>
</comment>
<comment type="activity regulation">
    <text evidence="2">Phosphorylation at Ser-33 inhibits the kinase and activates the bisphosphatase.</text>
</comment>
<comment type="subunit">
    <text evidence="2">Homodimer.</text>
</comment>
<comment type="tissue specificity">
    <text>Liver.</text>
</comment>
<comment type="similarity">
    <text evidence="6">In the C-terminal section; belongs to the phosphoglycerate mutase family.</text>
</comment>
<sequence>MSQEMGELTQTRLQKIWIPHNNGNSRLQRRRGSSIPQFTNSPTMVIMVGLPARGKTYISTKLTRYLNWIGTPTKVFNLGQYRREAVSYKNYEFFLPDNMEALLIRKQCALAALKDVHSYLSHEEGRVAVFDATNTTRERRSLILQFAKEHGYKVFFIESICNDPDVIAENIRQVKLGSPDYIDCDREKVLEDFLKRIECYEVNYQPLDDELDSHLSYIKIFDVGTRYMVNRVQDHIQSRTVYYLMNIHVTPRSIYLCRHGESELNLRGRIGGDSGLSARGKQYAYALANFIQSQGISSLKVGTSHMKRTIQTAEALGLPYEQWKALNEIDAGVCEEMTYEEIQEHYPEEFALRDQDKYRYRYPKGESYEDLVQRLEPVIMELERQENVLVICHQAVMRCLLAYFLDKSSDELPYLKCPLHTVLKLTPVAYGCKVESIYLNVEAVNTHREKPENVDITREPEEALDTVPAHY</sequence>
<reference key="1">
    <citation type="journal article" date="1991" name="Arch. Biochem. Biophys.">
        <title>Isolation of bovine liver 6-phosphofructo-2-kinase/fructose-2,6-bisphosphatase cDNA: bovine liver and heart forms of the enzyme are separate gene products.</title>
        <authorList>
            <person name="Lange A.J."/>
            <person name="El-Maghrabi M.R."/>
            <person name="Pilkis S.J."/>
        </authorList>
    </citation>
    <scope>NUCLEOTIDE SEQUENCE [MRNA]</scope>
    <source>
        <tissue>Liver</tissue>
    </source>
</reference>
<organism>
    <name type="scientific">Bos taurus</name>
    <name type="common">Bovine</name>
    <dbReference type="NCBI Taxonomy" id="9913"/>
    <lineage>
        <taxon>Eukaryota</taxon>
        <taxon>Metazoa</taxon>
        <taxon>Chordata</taxon>
        <taxon>Craniata</taxon>
        <taxon>Vertebrata</taxon>
        <taxon>Euteleostomi</taxon>
        <taxon>Mammalia</taxon>
        <taxon>Eutheria</taxon>
        <taxon>Laurasiatheria</taxon>
        <taxon>Artiodactyla</taxon>
        <taxon>Ruminantia</taxon>
        <taxon>Pecora</taxon>
        <taxon>Bovidae</taxon>
        <taxon>Bovinae</taxon>
        <taxon>Bos</taxon>
    </lineage>
</organism>
<evidence type="ECO:0000250" key="1">
    <source>
        <dbReference type="UniProtKB" id="P00950"/>
    </source>
</evidence>
<evidence type="ECO:0000250" key="2">
    <source>
        <dbReference type="UniProtKB" id="P07953"/>
    </source>
</evidence>
<evidence type="ECO:0000250" key="3">
    <source>
        <dbReference type="UniProtKB" id="P16118"/>
    </source>
</evidence>
<evidence type="ECO:0000250" key="4">
    <source>
        <dbReference type="UniProtKB" id="Q16875"/>
    </source>
</evidence>
<evidence type="ECO:0000255" key="5"/>
<evidence type="ECO:0000305" key="6"/>
<accession>P49872</accession>
<protein>
    <recommendedName>
        <fullName evidence="3">6-phosphofructo-2-kinase/fructose-2,6-bisphosphatase 1</fullName>
        <shortName>6PF-2-K/Fru-2,6-P2ase 1</shortName>
        <shortName>PFK/FBPase 1</shortName>
    </recommendedName>
    <alternativeName>
        <fullName>6PF-2-K/Fru-2,6-P2ase liver isozyme</fullName>
    </alternativeName>
    <domain>
        <recommendedName>
            <fullName>6-phosphofructo-2-kinase</fullName>
            <ecNumber evidence="2">2.7.1.105</ecNumber>
        </recommendedName>
    </domain>
    <domain>
        <recommendedName>
            <fullName>Fructose-2,6-bisphosphatase</fullName>
            <ecNumber evidence="2">3.1.3.46</ecNumber>
        </recommendedName>
    </domain>
</protein>
<feature type="initiator methionine" description="Removed" evidence="2">
    <location>
        <position position="1"/>
    </location>
</feature>
<feature type="chain" id="PRO_0000179959" description="6-phosphofructo-2-kinase/fructose-2,6-bisphosphatase 1">
    <location>
        <begin position="2"/>
        <end position="471"/>
    </location>
</feature>
<feature type="region of interest" description="6-phosphofructo-2-kinase">
    <location>
        <begin position="2"/>
        <end position="250"/>
    </location>
</feature>
<feature type="region of interest" description="Fructose-2,6-bisphosphatase">
    <location>
        <begin position="251"/>
        <end position="471"/>
    </location>
</feature>
<feature type="active site" evidence="5">
    <location>
        <position position="131"/>
    </location>
</feature>
<feature type="active site" evidence="5">
    <location>
        <position position="161"/>
    </location>
</feature>
<feature type="active site" description="Tele-phosphohistidine intermediate" evidence="2">
    <location>
        <position position="259"/>
    </location>
</feature>
<feature type="active site" description="Proton donor/acceptor" evidence="2">
    <location>
        <position position="328"/>
    </location>
</feature>
<feature type="binding site" evidence="4">
    <location>
        <begin position="49"/>
        <end position="57"/>
    </location>
    <ligand>
        <name>ATP</name>
        <dbReference type="ChEBI" id="CHEBI:30616"/>
    </ligand>
</feature>
<feature type="binding site" evidence="4">
    <location>
        <position position="82"/>
    </location>
    <ligand>
        <name>beta-D-fructose 6-phosphate</name>
        <dbReference type="ChEBI" id="CHEBI:57634"/>
    </ligand>
</feature>
<feature type="binding site" evidence="4">
    <location>
        <position position="105"/>
    </location>
    <ligand>
        <name>beta-D-fructose 6-phosphate</name>
        <dbReference type="ChEBI" id="CHEBI:57634"/>
    </ligand>
</feature>
<feature type="binding site" evidence="4">
    <location>
        <position position="133"/>
    </location>
    <ligand>
        <name>beta-D-fructose 6-phosphate</name>
        <dbReference type="ChEBI" id="CHEBI:57634"/>
    </ligand>
</feature>
<feature type="binding site" evidence="4">
    <location>
        <position position="139"/>
    </location>
    <ligand>
        <name>beta-D-fructose 6-phosphate</name>
        <dbReference type="ChEBI" id="CHEBI:57634"/>
    </ligand>
</feature>
<feature type="binding site" evidence="4">
    <location>
        <begin position="170"/>
        <end position="175"/>
    </location>
    <ligand>
        <name>ATP</name>
        <dbReference type="ChEBI" id="CHEBI:30616"/>
    </ligand>
</feature>
<feature type="binding site" evidence="4">
    <location>
        <position position="175"/>
    </location>
    <ligand>
        <name>beta-D-fructose 6-phosphate</name>
        <dbReference type="ChEBI" id="CHEBI:57634"/>
    </ligand>
</feature>
<feature type="binding site" evidence="4">
    <location>
        <position position="196"/>
    </location>
    <ligand>
        <name>beta-D-fructose 6-phosphate</name>
        <dbReference type="ChEBI" id="CHEBI:57634"/>
    </ligand>
</feature>
<feature type="binding site" evidence="4">
    <location>
        <position position="200"/>
    </location>
    <ligand>
        <name>beta-D-fructose 6-phosphate</name>
        <dbReference type="ChEBI" id="CHEBI:57634"/>
    </ligand>
</feature>
<feature type="binding site" evidence="4">
    <location>
        <position position="258"/>
    </location>
    <ligand>
        <name>beta-D-fructose 2,6-bisphosphate</name>
        <dbReference type="ChEBI" id="CHEBI:58579"/>
    </ligand>
</feature>
<feature type="binding site" evidence="4">
    <location>
        <position position="265"/>
    </location>
    <ligand>
        <name>beta-D-fructose 2,6-bisphosphate</name>
        <dbReference type="ChEBI" id="CHEBI:58579"/>
    </ligand>
</feature>
<feature type="binding site" evidence="2">
    <location>
        <position position="271"/>
    </location>
    <ligand>
        <name>beta-D-fructose 2,6-bisphosphate</name>
        <dbReference type="ChEBI" id="CHEBI:58579"/>
    </ligand>
</feature>
<feature type="binding site" evidence="4">
    <location>
        <position position="308"/>
    </location>
    <ligand>
        <name>beta-D-fructose 2,6-bisphosphate</name>
        <dbReference type="ChEBI" id="CHEBI:58579"/>
    </ligand>
</feature>
<feature type="binding site" evidence="2">
    <location>
        <position position="339"/>
    </location>
    <ligand>
        <name>beta-D-fructose 2,6-bisphosphate</name>
        <dbReference type="ChEBI" id="CHEBI:58579"/>
    </ligand>
</feature>
<feature type="binding site" evidence="2">
    <location>
        <begin position="350"/>
        <end position="353"/>
    </location>
    <ligand>
        <name>ATP</name>
        <dbReference type="ChEBI" id="CHEBI:30616"/>
    </ligand>
</feature>
<feature type="binding site" evidence="2">
    <location>
        <position position="353"/>
    </location>
    <ligand>
        <name>beta-D-fructose 2,6-bisphosphate</name>
        <dbReference type="ChEBI" id="CHEBI:58579"/>
    </ligand>
</feature>
<feature type="binding site" evidence="2">
    <location>
        <position position="357"/>
    </location>
    <ligand>
        <name>beta-D-fructose 2,6-bisphosphate</name>
        <dbReference type="ChEBI" id="CHEBI:58579"/>
    </ligand>
</feature>
<feature type="binding site" evidence="2">
    <location>
        <position position="368"/>
    </location>
    <ligand>
        <name>beta-D-fructose 2,6-bisphosphate</name>
        <dbReference type="ChEBI" id="CHEBI:58579"/>
    </ligand>
</feature>
<feature type="binding site" evidence="2">
    <location>
        <begin position="394"/>
        <end position="398"/>
    </location>
    <ligand>
        <name>ATP</name>
        <dbReference type="ChEBI" id="CHEBI:30616"/>
    </ligand>
</feature>
<feature type="binding site" evidence="2">
    <location>
        <position position="394"/>
    </location>
    <ligand>
        <name>beta-D-fructose 2,6-bisphosphate</name>
        <dbReference type="ChEBI" id="CHEBI:58579"/>
    </ligand>
</feature>
<feature type="binding site" evidence="2">
    <location>
        <position position="398"/>
    </location>
    <ligand>
        <name>beta-D-fructose 2,6-bisphosphate</name>
        <dbReference type="ChEBI" id="CHEBI:58579"/>
    </ligand>
</feature>
<feature type="binding site" evidence="4">
    <location>
        <position position="430"/>
    </location>
    <ligand>
        <name>ATP</name>
        <dbReference type="ChEBI" id="CHEBI:30616"/>
    </ligand>
</feature>
<feature type="site" description="Transition state stabilizer" evidence="1">
    <location>
        <position position="393"/>
    </location>
</feature>
<feature type="modified residue" description="N-acetylserine" evidence="2">
    <location>
        <position position="2"/>
    </location>
</feature>
<feature type="modified residue" description="Phosphoserine; by PKA" evidence="2">
    <location>
        <position position="33"/>
    </location>
</feature>
<feature type="modified residue" description="Phosphoserine" evidence="2">
    <location>
        <position position="141"/>
    </location>
</feature>
<dbReference type="EC" id="2.7.1.105" evidence="2"/>
<dbReference type="EC" id="3.1.3.46" evidence="2"/>
<dbReference type="EMBL" id="M64323">
    <property type="protein sequence ID" value="AAA30696.1"/>
    <property type="molecule type" value="mRNA"/>
</dbReference>
<dbReference type="EMBL" id="S55569">
    <property type="protein sequence ID" value="AAB19845.1"/>
    <property type="molecule type" value="mRNA"/>
</dbReference>
<dbReference type="PIR" id="A44872">
    <property type="entry name" value="A44872"/>
</dbReference>
<dbReference type="RefSeq" id="NP_776997.3">
    <property type="nucleotide sequence ID" value="NM_174572.4"/>
</dbReference>
<dbReference type="BMRB" id="P49872"/>
<dbReference type="SMR" id="P49872"/>
<dbReference type="FunCoup" id="P49872">
    <property type="interactions" value="721"/>
</dbReference>
<dbReference type="STRING" id="9913.ENSBTAP00000000198"/>
<dbReference type="PaxDb" id="9913-ENSBTAP00000000198"/>
<dbReference type="GeneID" id="282304"/>
<dbReference type="KEGG" id="bta:282304"/>
<dbReference type="CTD" id="5207"/>
<dbReference type="eggNOG" id="KOG0234">
    <property type="taxonomic scope" value="Eukaryota"/>
</dbReference>
<dbReference type="InParanoid" id="P49872"/>
<dbReference type="OrthoDB" id="267323at2759"/>
<dbReference type="BRENDA" id="3.1.3.46">
    <property type="organism ID" value="908"/>
</dbReference>
<dbReference type="Proteomes" id="UP000009136">
    <property type="component" value="Unplaced"/>
</dbReference>
<dbReference type="GO" id="GO:0043540">
    <property type="term" value="C:6-phosphofructo-2-kinase/fructose-2,6-biphosphatase complex"/>
    <property type="evidence" value="ECO:0000250"/>
    <property type="project" value="UniProtKB"/>
</dbReference>
<dbReference type="GO" id="GO:0005829">
    <property type="term" value="C:cytosol"/>
    <property type="evidence" value="ECO:0000318"/>
    <property type="project" value="GO_Central"/>
</dbReference>
<dbReference type="GO" id="GO:0003873">
    <property type="term" value="F:6-phosphofructo-2-kinase activity"/>
    <property type="evidence" value="ECO:0000318"/>
    <property type="project" value="GO_Central"/>
</dbReference>
<dbReference type="GO" id="GO:0005524">
    <property type="term" value="F:ATP binding"/>
    <property type="evidence" value="ECO:0007669"/>
    <property type="project" value="UniProtKB-KW"/>
</dbReference>
<dbReference type="GO" id="GO:0004331">
    <property type="term" value="F:fructose-2,6-bisphosphate 2-phosphatase activity"/>
    <property type="evidence" value="ECO:0000250"/>
    <property type="project" value="UniProtKB"/>
</dbReference>
<dbReference type="GO" id="GO:0006003">
    <property type="term" value="P:fructose 2,6-bisphosphate metabolic process"/>
    <property type="evidence" value="ECO:0000250"/>
    <property type="project" value="UniProtKB"/>
</dbReference>
<dbReference type="GO" id="GO:0006000">
    <property type="term" value="P:fructose metabolic process"/>
    <property type="evidence" value="ECO:0007669"/>
    <property type="project" value="InterPro"/>
</dbReference>
<dbReference type="CDD" id="cd07067">
    <property type="entry name" value="HP_PGM_like"/>
    <property type="match status" value="1"/>
</dbReference>
<dbReference type="FunFam" id="3.40.50.1240:FF:000001">
    <property type="entry name" value="6-phosphofructo-2-kinase/fructose-2, 6-bisphosphatase 3 isoform 2"/>
    <property type="match status" value="1"/>
</dbReference>
<dbReference type="FunFam" id="3.40.50.300:FF:000047">
    <property type="entry name" value="6-phosphofructo-2-kinase/fructose-2, 6-bisphosphatase 3 isoform 2"/>
    <property type="match status" value="1"/>
</dbReference>
<dbReference type="Gene3D" id="3.40.50.300">
    <property type="entry name" value="P-loop containing nucleotide triphosphate hydrolases"/>
    <property type="match status" value="1"/>
</dbReference>
<dbReference type="Gene3D" id="3.40.50.1240">
    <property type="entry name" value="Phosphoglycerate mutase-like"/>
    <property type="match status" value="1"/>
</dbReference>
<dbReference type="InterPro" id="IPR003094">
    <property type="entry name" value="6Pfruct_kin"/>
</dbReference>
<dbReference type="InterPro" id="IPR013079">
    <property type="entry name" value="6Phosfructo_kin"/>
</dbReference>
<dbReference type="InterPro" id="IPR013078">
    <property type="entry name" value="His_Pase_superF_clade-1"/>
</dbReference>
<dbReference type="InterPro" id="IPR029033">
    <property type="entry name" value="His_PPase_superfam"/>
</dbReference>
<dbReference type="InterPro" id="IPR027417">
    <property type="entry name" value="P-loop_NTPase"/>
</dbReference>
<dbReference type="InterPro" id="IPR001345">
    <property type="entry name" value="PG/BPGM_mutase_AS"/>
</dbReference>
<dbReference type="PANTHER" id="PTHR10606">
    <property type="entry name" value="6-PHOSPHOFRUCTO-2-KINASE/FRUCTOSE-2,6-BISPHOSPHATASE"/>
    <property type="match status" value="1"/>
</dbReference>
<dbReference type="PANTHER" id="PTHR10606:SF15">
    <property type="entry name" value="6-PHOSPHOFRUCTO-2-KINASE_FRUCTOSE-2,6-BISPHOSPHATASE 1"/>
    <property type="match status" value="1"/>
</dbReference>
<dbReference type="Pfam" id="PF01591">
    <property type="entry name" value="6PF2K"/>
    <property type="match status" value="1"/>
</dbReference>
<dbReference type="Pfam" id="PF00300">
    <property type="entry name" value="His_Phos_1"/>
    <property type="match status" value="1"/>
</dbReference>
<dbReference type="PIRSF" id="PIRSF000709">
    <property type="entry name" value="6PFK_2-Ptase"/>
    <property type="match status" value="1"/>
</dbReference>
<dbReference type="PRINTS" id="PR00991">
    <property type="entry name" value="6PFRUCTKNASE"/>
</dbReference>
<dbReference type="SMART" id="SM00855">
    <property type="entry name" value="PGAM"/>
    <property type="match status" value="1"/>
</dbReference>
<dbReference type="SUPFAM" id="SSF52540">
    <property type="entry name" value="P-loop containing nucleoside triphosphate hydrolases"/>
    <property type="match status" value="1"/>
</dbReference>
<dbReference type="SUPFAM" id="SSF53254">
    <property type="entry name" value="Phosphoglycerate mutase-like"/>
    <property type="match status" value="1"/>
</dbReference>
<dbReference type="PROSITE" id="PS00175">
    <property type="entry name" value="PG_MUTASE"/>
    <property type="match status" value="1"/>
</dbReference>
<gene>
    <name evidence="3" type="primary">PFKFB1</name>
</gene>
<name>F261_BOVIN</name>
<proteinExistence type="evidence at transcript level"/>
<keyword id="KW-0007">Acetylation</keyword>
<keyword id="KW-0067">ATP-binding</keyword>
<keyword id="KW-0378">Hydrolase</keyword>
<keyword id="KW-0418">Kinase</keyword>
<keyword id="KW-0511">Multifunctional enzyme</keyword>
<keyword id="KW-0547">Nucleotide-binding</keyword>
<keyword id="KW-0597">Phosphoprotein</keyword>
<keyword id="KW-1185">Reference proteome</keyword>
<keyword id="KW-0808">Transferase</keyword>